<accession>P11931</accession>
<reference key="1">
    <citation type="journal article" date="1987" name="Biochemistry">
        <title>The valyl-tRNA synthetase from Bacillus stearothermophilus has considerable sequence homology with the isoleucyl-tRNA synthetase from Escherichia coli.</title>
        <authorList>
            <person name="Borgford T.J."/>
            <person name="Brand N.J."/>
            <person name="Gray T.E."/>
            <person name="Fersht A.R."/>
        </authorList>
    </citation>
    <scope>NUCLEOTIDE SEQUENCE [GENOMIC DNA]</scope>
</reference>
<reference key="2">
    <citation type="journal article" date="1976" name="Biochemistry">
        <title>Enzyme hyperspecificity. Rejection of threonine by the valyl-tRNA synthetase by misacylation and hydrolytic editing.</title>
        <authorList>
            <person name="Fersht A.R."/>
            <person name="Kaethner M.M."/>
        </authorList>
    </citation>
    <scope>EDITING ACTIVITY</scope>
</reference>
<reference key="3">
    <citation type="journal article" date="1996" name="Biochemistry">
        <title>Mutational analysis suggests the same design for editing activities of two tRNA synthetases.</title>
        <authorList>
            <person name="Lin L."/>
            <person name="Schimmel P."/>
        </authorList>
    </citation>
    <scope>KINETIC PARAMETERS</scope>
    <scope>MUTAGENESIS OF PRO-47; GLY-85 AND ASP-87</scope>
</reference>
<feature type="chain" id="PRO_0000106213" description="Valine--tRNA ligase">
    <location>
        <begin position="1"/>
        <end position="880"/>
    </location>
</feature>
<feature type="coiled-coil region" evidence="2">
    <location>
        <begin position="809"/>
        <end position="880"/>
    </location>
</feature>
<feature type="short sequence motif" description="'HIGH' region">
    <location>
        <begin position="49"/>
        <end position="59"/>
    </location>
</feature>
<feature type="short sequence motif" description="'KMSKS' region">
    <location>
        <begin position="525"/>
        <end position="529"/>
    </location>
</feature>
<feature type="binding site" evidence="1">
    <location>
        <position position="528"/>
    </location>
    <ligand>
        <name>ATP</name>
        <dbReference type="ChEBI" id="CHEBI:30616"/>
    </ligand>
</feature>
<feature type="mutagenesis site" description="Has little effect on amino acid activation." evidence="3">
    <original>P</original>
    <variation>A</variation>
    <location>
        <position position="47"/>
    </location>
</feature>
<feature type="mutagenesis site" description="Strong decrease in amino acid activation." evidence="3">
    <original>P</original>
    <variation>G</variation>
    <location>
        <position position="47"/>
    </location>
</feature>
<feature type="mutagenesis site" description="Strong decrease in amino acid activation. No effect on posttransfer editing activity." evidence="3">
    <original>P</original>
    <variation>I</variation>
    <location>
        <position position="47"/>
    </location>
</feature>
<feature type="mutagenesis site" description="Strong decrease in amino acid activation." evidence="3">
    <original>G</original>
    <variation>R</variation>
    <location>
        <position position="85"/>
    </location>
</feature>
<feature type="mutagenesis site" description="Strong decrease in amino acid activation. No effect on posttransfer editing activity." evidence="3">
    <original>D</original>
    <variation>A</variation>
    <location>
        <position position="87"/>
    </location>
</feature>
<evidence type="ECO:0000250" key="1"/>
<evidence type="ECO:0000255" key="2"/>
<evidence type="ECO:0000269" key="3">
    <source>
    </source>
</evidence>
<evidence type="ECO:0000305" key="4"/>
<sequence>MAQHEVSMPPKYDHRAVEAGRYEWWLKGKFFEATGDPNKRPFTIVIPPPNVTGKLHLGHAWDTTLQDIITRMKRMQGYDVLWLPGMDHAGIATQAKVEEKLRQQGLSRYDLGREKFLEETWKWKEEYAGHIRSQWAKLGLGLDYTRERFTLDEGLSKAVREVFVSLYRKGLIYRGEYIINWDPVTKTALSDIEVVYKEVKGALYHMRYPLADGSGFIEVATTRPETMLGDTAVAVHPDDERYKHLIGKMVKLPIVGREIPIIADEYVDMEFGSGAVKITPAHDPNDFEIGNRHNLPRILVMNEDGTMNENAMQYQGLDRFECRKQIVRDLQEQGVLFKIEEHVHSVGHSERSGAVIEPYLSTQWFVKMKPLAEAAIKLQQTDGKVQFVPERFEKTYLHWLENIRHWCISRQLWWGHRIPAWYHKETGEIYVDHEPPKDIENWEQDPDVLDTWFSSALWPFSTMGWPDTDSPDYKRYYPTDVLVTGYDIIFFWVSRMIFQGLEFTGKRPFKDVLIHGLVRDAQGRKMSKSLGNGVDPMDVIDQYGADALRYFLATGSSPGQDLRFSTEKVEATWNFANKIWNASRFALMNMGGMTYEELDLSGEKTVADHWILTRLNETIETVTKLAEKYEFGERGRTLYNFIWDDLCDWYIEMAKLPLYGDDEAAKKTTRSVLAYVLDNTMRLLHPFMPFITEEIWQNLPHEGESITVAPWPQVRPELSNEEAAEEMRMLVDIIRAVRNVRAEVNTPPSKPIALYIKTKDEHVRAALLKNRAYLERFCNPSELLIDTNVPAPDKAMTAVVTGAELIMPLEGLINIEEEIKRLEKELDKWNKEVERVEKKLANEGFLAKAPAHVVEEERRKRQDYIEKREAVKARLAELKR</sequence>
<protein>
    <recommendedName>
        <fullName>Valine--tRNA ligase</fullName>
        <ecNumber>6.1.1.9</ecNumber>
    </recommendedName>
    <alternativeName>
        <fullName>Valyl-tRNA synthetase</fullName>
        <shortName>ValRS</shortName>
    </alternativeName>
</protein>
<name>SYV_GEOSE</name>
<proteinExistence type="evidence at protein level"/>
<keyword id="KW-0030">Aminoacyl-tRNA synthetase</keyword>
<keyword id="KW-0067">ATP-binding</keyword>
<keyword id="KW-0175">Coiled coil</keyword>
<keyword id="KW-0963">Cytoplasm</keyword>
<keyword id="KW-0436">Ligase</keyword>
<keyword id="KW-0547">Nucleotide-binding</keyword>
<keyword id="KW-0648">Protein biosynthesis</keyword>
<comment type="function">
    <text>Catalyzes the attachment of valine to tRNA(Val). As ValRS can inadvertently accommodate and process structurally similar amino acids such as threonine, to avoid such errors, it has a 'posttransfer' editing activity that hydrolyzes mischarged Thr-tRNA(Val) in a tRNA-dependent manner.</text>
</comment>
<comment type="catalytic activity">
    <reaction>
        <text>tRNA(Val) + L-valine + ATP = L-valyl-tRNA(Val) + AMP + diphosphate</text>
        <dbReference type="Rhea" id="RHEA:10704"/>
        <dbReference type="Rhea" id="RHEA-COMP:9672"/>
        <dbReference type="Rhea" id="RHEA-COMP:9708"/>
        <dbReference type="ChEBI" id="CHEBI:30616"/>
        <dbReference type="ChEBI" id="CHEBI:33019"/>
        <dbReference type="ChEBI" id="CHEBI:57762"/>
        <dbReference type="ChEBI" id="CHEBI:78442"/>
        <dbReference type="ChEBI" id="CHEBI:78537"/>
        <dbReference type="ChEBI" id="CHEBI:456215"/>
        <dbReference type="EC" id="6.1.1.9"/>
    </reaction>
</comment>
<comment type="biophysicochemical properties">
    <kinetics>
        <KM evidence="3">59 uM for valine</KM>
        <KM evidence="3">16 mM for threonine</KM>
    </kinetics>
</comment>
<comment type="subunit">
    <text>Monomer.</text>
</comment>
<comment type="subcellular location">
    <subcellularLocation>
        <location>Cytoplasm</location>
    </subcellularLocation>
</comment>
<comment type="domain">
    <text>ValRS has two distinct active sites: one for aminoacylation and one for editing. The misactivated threonine is translocated from the active site to the editing site.</text>
</comment>
<comment type="domain">
    <text evidence="1">The C-terminal coiled-coil domain is crucial for aminoacylation activity.</text>
</comment>
<comment type="similarity">
    <text evidence="4">Belongs to the class-I aminoacyl-tRNA synthetase family. ValS type 1 subfamily.</text>
</comment>
<gene>
    <name type="primary">valS</name>
</gene>
<organism>
    <name type="scientific">Geobacillus stearothermophilus</name>
    <name type="common">Bacillus stearothermophilus</name>
    <dbReference type="NCBI Taxonomy" id="1422"/>
    <lineage>
        <taxon>Bacteria</taxon>
        <taxon>Bacillati</taxon>
        <taxon>Bacillota</taxon>
        <taxon>Bacilli</taxon>
        <taxon>Bacillales</taxon>
        <taxon>Anoxybacillaceae</taxon>
        <taxon>Geobacillus</taxon>
    </lineage>
</organism>
<dbReference type="EC" id="6.1.1.9"/>
<dbReference type="EMBL" id="M16318">
    <property type="protein sequence ID" value="AAA22879.1"/>
    <property type="molecule type" value="Genomic_DNA"/>
</dbReference>
<dbReference type="PIR" id="A26738">
    <property type="entry name" value="SYBSVS"/>
</dbReference>
<dbReference type="SMR" id="P11931"/>
<dbReference type="SABIO-RK" id="P11931"/>
<dbReference type="GO" id="GO:0005829">
    <property type="term" value="C:cytosol"/>
    <property type="evidence" value="ECO:0007669"/>
    <property type="project" value="TreeGrafter"/>
</dbReference>
<dbReference type="GO" id="GO:0002161">
    <property type="term" value="F:aminoacyl-tRNA deacylase activity"/>
    <property type="evidence" value="ECO:0007669"/>
    <property type="project" value="InterPro"/>
</dbReference>
<dbReference type="GO" id="GO:0005524">
    <property type="term" value="F:ATP binding"/>
    <property type="evidence" value="ECO:0007669"/>
    <property type="project" value="UniProtKB-UniRule"/>
</dbReference>
<dbReference type="GO" id="GO:0004832">
    <property type="term" value="F:valine-tRNA ligase activity"/>
    <property type="evidence" value="ECO:0007669"/>
    <property type="project" value="UniProtKB-UniRule"/>
</dbReference>
<dbReference type="GO" id="GO:0006438">
    <property type="term" value="P:valyl-tRNA aminoacylation"/>
    <property type="evidence" value="ECO:0007669"/>
    <property type="project" value="UniProtKB-UniRule"/>
</dbReference>
<dbReference type="CDD" id="cd07962">
    <property type="entry name" value="Anticodon_Ia_Val"/>
    <property type="match status" value="1"/>
</dbReference>
<dbReference type="CDD" id="cd00817">
    <property type="entry name" value="ValRS_core"/>
    <property type="match status" value="1"/>
</dbReference>
<dbReference type="FunFam" id="1.10.287.380:FF:000001">
    <property type="entry name" value="Valine--tRNA ligase"/>
    <property type="match status" value="1"/>
</dbReference>
<dbReference type="FunFam" id="1.10.730.10:FF:000014">
    <property type="entry name" value="Valine--tRNA ligase"/>
    <property type="match status" value="1"/>
</dbReference>
<dbReference type="FunFam" id="3.40.50.620:FF:000032">
    <property type="entry name" value="Valine--tRNA ligase"/>
    <property type="match status" value="1"/>
</dbReference>
<dbReference type="FunFam" id="3.40.50.620:FF:000098">
    <property type="entry name" value="Valine--tRNA ligase"/>
    <property type="match status" value="1"/>
</dbReference>
<dbReference type="FunFam" id="3.90.740.10:FF:000005">
    <property type="entry name" value="Valine--tRNA ligase, mitochondrial"/>
    <property type="match status" value="1"/>
</dbReference>
<dbReference type="Gene3D" id="3.40.50.620">
    <property type="entry name" value="HUPs"/>
    <property type="match status" value="3"/>
</dbReference>
<dbReference type="Gene3D" id="1.10.730.10">
    <property type="entry name" value="Isoleucyl-tRNA Synthetase, Domain 1"/>
    <property type="match status" value="1"/>
</dbReference>
<dbReference type="Gene3D" id="1.10.287.380">
    <property type="entry name" value="Valyl-tRNA synthetase, C-terminal domain"/>
    <property type="match status" value="1"/>
</dbReference>
<dbReference type="Gene3D" id="3.90.740.10">
    <property type="entry name" value="Valyl/Leucyl/Isoleucyl-tRNA synthetase, editing domain"/>
    <property type="match status" value="1"/>
</dbReference>
<dbReference type="HAMAP" id="MF_02004">
    <property type="entry name" value="Val_tRNA_synth_type1"/>
    <property type="match status" value="1"/>
</dbReference>
<dbReference type="InterPro" id="IPR001412">
    <property type="entry name" value="aa-tRNA-synth_I_CS"/>
</dbReference>
<dbReference type="InterPro" id="IPR002300">
    <property type="entry name" value="aa-tRNA-synth_Ia"/>
</dbReference>
<dbReference type="InterPro" id="IPR033705">
    <property type="entry name" value="Anticodon_Ia_Val"/>
</dbReference>
<dbReference type="InterPro" id="IPR013155">
    <property type="entry name" value="M/V/L/I-tRNA-synth_anticd-bd"/>
</dbReference>
<dbReference type="InterPro" id="IPR014729">
    <property type="entry name" value="Rossmann-like_a/b/a_fold"/>
</dbReference>
<dbReference type="InterPro" id="IPR010978">
    <property type="entry name" value="tRNA-bd_arm"/>
</dbReference>
<dbReference type="InterPro" id="IPR009080">
    <property type="entry name" value="tRNAsynth_Ia_anticodon-bd"/>
</dbReference>
<dbReference type="InterPro" id="IPR037118">
    <property type="entry name" value="Val-tRNA_synth_C_sf"/>
</dbReference>
<dbReference type="InterPro" id="IPR019499">
    <property type="entry name" value="Val-tRNA_synth_tRNA-bd"/>
</dbReference>
<dbReference type="InterPro" id="IPR009008">
    <property type="entry name" value="Val/Leu/Ile-tRNA-synth_edit"/>
</dbReference>
<dbReference type="InterPro" id="IPR002303">
    <property type="entry name" value="Valyl-tRNA_ligase"/>
</dbReference>
<dbReference type="NCBIfam" id="NF004349">
    <property type="entry name" value="PRK05729.1"/>
    <property type="match status" value="1"/>
</dbReference>
<dbReference type="NCBIfam" id="TIGR00422">
    <property type="entry name" value="valS"/>
    <property type="match status" value="1"/>
</dbReference>
<dbReference type="PANTHER" id="PTHR11946:SF93">
    <property type="entry name" value="VALINE--TRNA LIGASE, CHLOROPLASTIC_MITOCHONDRIAL 2"/>
    <property type="match status" value="1"/>
</dbReference>
<dbReference type="PANTHER" id="PTHR11946">
    <property type="entry name" value="VALYL-TRNA SYNTHETASES"/>
    <property type="match status" value="1"/>
</dbReference>
<dbReference type="Pfam" id="PF08264">
    <property type="entry name" value="Anticodon_1"/>
    <property type="match status" value="1"/>
</dbReference>
<dbReference type="Pfam" id="PF00133">
    <property type="entry name" value="tRNA-synt_1"/>
    <property type="match status" value="1"/>
</dbReference>
<dbReference type="Pfam" id="PF10458">
    <property type="entry name" value="Val_tRNA-synt_C"/>
    <property type="match status" value="1"/>
</dbReference>
<dbReference type="PRINTS" id="PR00986">
    <property type="entry name" value="TRNASYNTHVAL"/>
</dbReference>
<dbReference type="SUPFAM" id="SSF47323">
    <property type="entry name" value="Anticodon-binding domain of a subclass of class I aminoacyl-tRNA synthetases"/>
    <property type="match status" value="1"/>
</dbReference>
<dbReference type="SUPFAM" id="SSF52374">
    <property type="entry name" value="Nucleotidylyl transferase"/>
    <property type="match status" value="1"/>
</dbReference>
<dbReference type="SUPFAM" id="SSF46589">
    <property type="entry name" value="tRNA-binding arm"/>
    <property type="match status" value="1"/>
</dbReference>
<dbReference type="SUPFAM" id="SSF50677">
    <property type="entry name" value="ValRS/IleRS/LeuRS editing domain"/>
    <property type="match status" value="1"/>
</dbReference>
<dbReference type="PROSITE" id="PS00178">
    <property type="entry name" value="AA_TRNA_LIGASE_I"/>
    <property type="match status" value="1"/>
</dbReference>